<organism>
    <name type="scientific">Streptomyces coelicolor (strain ATCC BAA-471 / A3(2) / M145)</name>
    <dbReference type="NCBI Taxonomy" id="100226"/>
    <lineage>
        <taxon>Bacteria</taxon>
        <taxon>Bacillati</taxon>
        <taxon>Actinomycetota</taxon>
        <taxon>Actinomycetes</taxon>
        <taxon>Kitasatosporales</taxon>
        <taxon>Streptomycetaceae</taxon>
        <taxon>Streptomyces</taxon>
        <taxon>Streptomyces albidoflavus group</taxon>
    </lineage>
</organism>
<proteinExistence type="evidence at protein level"/>
<feature type="chain" id="PRO_0000447875" description="Diacetylchitobiose uptake system permease protein DasC">
    <location>
        <begin position="1"/>
        <end position="276"/>
    </location>
</feature>
<feature type="transmembrane region" description="Helical" evidence="1">
    <location>
        <begin position="14"/>
        <end position="34"/>
    </location>
</feature>
<feature type="transmembrane region" description="Helical" evidence="1">
    <location>
        <begin position="74"/>
        <end position="94"/>
    </location>
</feature>
<feature type="transmembrane region" description="Helical" evidence="1">
    <location>
        <begin position="105"/>
        <end position="125"/>
    </location>
</feature>
<feature type="transmembrane region" description="Helical" evidence="1">
    <location>
        <begin position="137"/>
        <end position="157"/>
    </location>
</feature>
<feature type="transmembrane region" description="Helical" evidence="1">
    <location>
        <begin position="186"/>
        <end position="206"/>
    </location>
</feature>
<feature type="transmembrane region" description="Helical" evidence="1">
    <location>
        <begin position="241"/>
        <end position="261"/>
    </location>
</feature>
<feature type="domain" description="ABC transmembrane type-1" evidence="2">
    <location>
        <begin position="70"/>
        <end position="261"/>
    </location>
</feature>
<protein>
    <recommendedName>
        <fullName evidence="5">Diacetylchitobiose uptake system permease protein DasC</fullName>
    </recommendedName>
</protein>
<evidence type="ECO:0000255" key="1"/>
<evidence type="ECO:0000255" key="2">
    <source>
        <dbReference type="PROSITE-ProRule" id="PRU00441"/>
    </source>
</evidence>
<evidence type="ECO:0000269" key="3">
    <source>
    </source>
</evidence>
<evidence type="ECO:0000303" key="4">
    <source>
    </source>
</evidence>
<evidence type="ECO:0000305" key="5"/>
<evidence type="ECO:0000305" key="6">
    <source>
    </source>
</evidence>
<evidence type="ECO:0000305" key="7">
    <source>
    </source>
</evidence>
<evidence type="ECO:0000312" key="8">
    <source>
        <dbReference type="EMBL" id="CAB94619.1"/>
    </source>
</evidence>
<reference key="1">
    <citation type="journal article" date="2002" name="Nature">
        <title>Complete genome sequence of the model actinomycete Streptomyces coelicolor A3(2).</title>
        <authorList>
            <person name="Bentley S.D."/>
            <person name="Chater K.F."/>
            <person name="Cerdeno-Tarraga A.-M."/>
            <person name="Challis G.L."/>
            <person name="Thomson N.R."/>
            <person name="James K.D."/>
            <person name="Harris D.E."/>
            <person name="Quail M.A."/>
            <person name="Kieser H."/>
            <person name="Harper D."/>
            <person name="Bateman A."/>
            <person name="Brown S."/>
            <person name="Chandra G."/>
            <person name="Chen C.W."/>
            <person name="Collins M."/>
            <person name="Cronin A."/>
            <person name="Fraser A."/>
            <person name="Goble A."/>
            <person name="Hidalgo J."/>
            <person name="Hornsby T."/>
            <person name="Howarth S."/>
            <person name="Huang C.-H."/>
            <person name="Kieser T."/>
            <person name="Larke L."/>
            <person name="Murphy L.D."/>
            <person name="Oliver K."/>
            <person name="O'Neil S."/>
            <person name="Rabbinowitsch E."/>
            <person name="Rajandream M.A."/>
            <person name="Rutherford K.M."/>
            <person name="Rutter S."/>
            <person name="Seeger K."/>
            <person name="Saunders D."/>
            <person name="Sharp S."/>
            <person name="Squares R."/>
            <person name="Squares S."/>
            <person name="Taylor K."/>
            <person name="Warren T."/>
            <person name="Wietzorrek A."/>
            <person name="Woodward J.R."/>
            <person name="Barrell B.G."/>
            <person name="Parkhill J."/>
            <person name="Hopwood D.A."/>
        </authorList>
    </citation>
    <scope>NUCLEOTIDE SEQUENCE [LARGE SCALE GENOMIC DNA]</scope>
    <source>
        <strain>ATCC BAA-471 / A3(2) / M145</strain>
    </source>
</reference>
<reference key="2">
    <citation type="journal article" date="2007" name="Appl. Environ. Microbiol.">
        <title>The dasABC gene cluster, adjacent to dasR, encodes a novel ABC transporter for the uptake of N,N'-diacetylchitobiose in Streptomyces coelicolor A3(2).</title>
        <authorList>
            <person name="Saito A."/>
            <person name="Shinya T."/>
            <person name="Miyamoto K."/>
            <person name="Yokoyama T."/>
            <person name="Kaku H."/>
            <person name="Minami E."/>
            <person name="Shibuya N."/>
            <person name="Tsujibo H."/>
            <person name="Nagata Y."/>
            <person name="Ando A."/>
            <person name="Fujii T."/>
            <person name="Miyashita K."/>
        </authorList>
    </citation>
    <scope>FUNCTION</scope>
    <scope>INDUCTION</scope>
    <source>
        <strain>ATCC BAA-471 / A3(2) / M145</strain>
    </source>
</reference>
<reference key="3">
    <citation type="journal article" date="2008" name="Microbiology">
        <title>The msiK gene, encoding the ATP-hydrolysing component of N,N'-diacetylchitobiose ABC transporters, is essential for induction of chitinase production in Streptomyces coelicolor A3(2).</title>
        <authorList>
            <person name="Saito A."/>
            <person name="Fujii T."/>
            <person name="Shinya T."/>
            <person name="Shibuya N."/>
            <person name="Ando A."/>
            <person name="Miyashita K."/>
        </authorList>
    </citation>
    <scope>SUBUNIT</scope>
    <source>
        <strain>ATCC BAA-471 / A3(2) / M145</strain>
    </source>
</reference>
<keyword id="KW-1003">Cell membrane</keyword>
<keyword id="KW-0472">Membrane</keyword>
<keyword id="KW-1185">Reference proteome</keyword>
<keyword id="KW-0762">Sugar transport</keyword>
<keyword id="KW-0812">Transmembrane</keyword>
<keyword id="KW-1133">Transmembrane helix</keyword>
<keyword id="KW-0813">Transport</keyword>
<comment type="function">
    <text evidence="6">Part of the ABC transporter complex DasABC-MsiK involved in N,N'-diacetylchitobiose ((GlcNAc)2) uptake. Responsible for the translocation of the substrate across the membrane.</text>
</comment>
<comment type="subunit">
    <text evidence="7">The complex is composed of two ATP-binding proteins (MsiK), two transmembrane proteins (DasB and DasC) and a solute-binding protein (DasA).</text>
</comment>
<comment type="subcellular location">
    <subcellularLocation>
        <location evidence="5">Cell membrane</location>
        <topology evidence="1">Multi-pass membrane protein</topology>
    </subcellularLocation>
</comment>
<comment type="induction">
    <text evidence="3">Induced by (GlcNAc)2 and (GlcNAc)3.</text>
</comment>
<comment type="similarity">
    <text evidence="5">Belongs to the binding-protein-dependent transport system permease family.</text>
</comment>
<sequence length="276" mass="30681">MKRSLFGRVWPNVTAVVLFIGLVFPVYWMFATAFKPTGDIISENPVWFPTDITFEHFKTATEADHFWTYVSNSLIVTVCAVVFSLVIALAGSFALARMRFKGRRGFIVGFMLAQMAPWEVMVIAIYMIVRDASMLNSLVPLTLFYMMMILPFTILTLRGFVAAVPKELEESAMVDGCTRAQAFRRVILPLLAPGLMSTSMFGFITAWNELPLVLVVNKEAESQTLPLWLTSFQTVFGDNWGATMAASSLFAIPILILFVYLQRKAVSGLTAGAVKG</sequence>
<name>DASC_STRCO</name>
<dbReference type="EMBL" id="AL939123">
    <property type="protein sequence ID" value="CAB94619.1"/>
    <property type="molecule type" value="Genomic_DNA"/>
</dbReference>
<dbReference type="RefSeq" id="NP_629381.1">
    <property type="nucleotide sequence ID" value="NC_003888.3"/>
</dbReference>
<dbReference type="RefSeq" id="WP_003973737.1">
    <property type="nucleotide sequence ID" value="NZ_VNID01000008.1"/>
</dbReference>
<dbReference type="SMR" id="Q9K489"/>
<dbReference type="STRING" id="100226.gene:17762885"/>
<dbReference type="PaxDb" id="100226-SCO5234"/>
<dbReference type="KEGG" id="sco:SCO5234"/>
<dbReference type="PATRIC" id="fig|100226.15.peg.5317"/>
<dbReference type="eggNOG" id="COG0395">
    <property type="taxonomic scope" value="Bacteria"/>
</dbReference>
<dbReference type="HOGENOM" id="CLU_016047_1_2_11"/>
<dbReference type="InParanoid" id="Q9K489"/>
<dbReference type="OrthoDB" id="9794684at2"/>
<dbReference type="PhylomeDB" id="Q9K489"/>
<dbReference type="Proteomes" id="UP000001973">
    <property type="component" value="Chromosome"/>
</dbReference>
<dbReference type="GO" id="GO:0005886">
    <property type="term" value="C:plasma membrane"/>
    <property type="evidence" value="ECO:0007669"/>
    <property type="project" value="UniProtKB-SubCell"/>
</dbReference>
<dbReference type="GO" id="GO:0055085">
    <property type="term" value="P:transmembrane transport"/>
    <property type="evidence" value="ECO:0007669"/>
    <property type="project" value="InterPro"/>
</dbReference>
<dbReference type="CDD" id="cd06261">
    <property type="entry name" value="TM_PBP2"/>
    <property type="match status" value="1"/>
</dbReference>
<dbReference type="Gene3D" id="1.10.3720.10">
    <property type="entry name" value="MetI-like"/>
    <property type="match status" value="1"/>
</dbReference>
<dbReference type="InterPro" id="IPR050901">
    <property type="entry name" value="BP-dep_ABC_trans_perm"/>
</dbReference>
<dbReference type="InterPro" id="IPR000515">
    <property type="entry name" value="MetI-like"/>
</dbReference>
<dbReference type="InterPro" id="IPR035906">
    <property type="entry name" value="MetI-like_sf"/>
</dbReference>
<dbReference type="PANTHER" id="PTHR32243:SF18">
    <property type="entry name" value="INNER MEMBRANE ABC TRANSPORTER PERMEASE PROTEIN YCJP"/>
    <property type="match status" value="1"/>
</dbReference>
<dbReference type="PANTHER" id="PTHR32243">
    <property type="entry name" value="MALTOSE TRANSPORT SYSTEM PERMEASE-RELATED"/>
    <property type="match status" value="1"/>
</dbReference>
<dbReference type="Pfam" id="PF00528">
    <property type="entry name" value="BPD_transp_1"/>
    <property type="match status" value="1"/>
</dbReference>
<dbReference type="SUPFAM" id="SSF161098">
    <property type="entry name" value="MetI-like"/>
    <property type="match status" value="1"/>
</dbReference>
<dbReference type="PROSITE" id="PS50928">
    <property type="entry name" value="ABC_TM1"/>
    <property type="match status" value="1"/>
</dbReference>
<accession>Q9K489</accession>
<gene>
    <name evidence="4" type="primary">dasC</name>
    <name evidence="8" type="ordered locus">SCO5234</name>
</gene>